<accession>A0LWT8</accession>
<sequence length="428" mass="46407">MPAIVLLGAQWGDEGKGKATDLLAERIDYCVRFNGGNNAGHTIVIDGETYAMHLLPSGVLTPGVVPVIGNGVVIDLGVLFDEIDLLTARGIDTSRLVVSANAHVITAYHRVIDKVTERFLGKARIGTTGRGIGPAYADKMSRVGVRVQDLFDEKILRQKIEGALDQKNQLLVKVYNRRAIDPTAVADELLGYADRLRPMVADTAALLNDALDHHKTVLLEAGQGTLLDVDHGTYPFVTSSNATAGGACTGSGIGPTRIDRVIAVAKAYTTRVGSGPFPTELHDGEGEKLRRIGAEFGVTTGRPRRCGWYDAVAVRYAMRINGVTDVVLTKLDVLSHFERIPVCVAYRLPDGRTVEEMPMTQTELHHVEPVYEELPGWQEDLSAARSLEDLPKNAQRYVEFLQELAGVPFSVIGVGPGRDQTIQLKALV</sequence>
<gene>
    <name evidence="1" type="primary">purA</name>
    <name type="ordered locus">Acel_2126</name>
</gene>
<name>PURA_ACIC1</name>
<feature type="chain" id="PRO_1000000768" description="Adenylosuccinate synthetase">
    <location>
        <begin position="1"/>
        <end position="428"/>
    </location>
</feature>
<feature type="active site" description="Proton acceptor" evidence="1">
    <location>
        <position position="13"/>
    </location>
</feature>
<feature type="active site" description="Proton donor" evidence="1">
    <location>
        <position position="41"/>
    </location>
</feature>
<feature type="binding site" evidence="1">
    <location>
        <begin position="12"/>
        <end position="18"/>
    </location>
    <ligand>
        <name>GTP</name>
        <dbReference type="ChEBI" id="CHEBI:37565"/>
    </ligand>
</feature>
<feature type="binding site" description="in other chain" evidence="1">
    <location>
        <begin position="13"/>
        <end position="16"/>
    </location>
    <ligand>
        <name>IMP</name>
        <dbReference type="ChEBI" id="CHEBI:58053"/>
        <note>ligand shared between dimeric partners</note>
    </ligand>
</feature>
<feature type="binding site" evidence="1">
    <location>
        <position position="13"/>
    </location>
    <ligand>
        <name>Mg(2+)</name>
        <dbReference type="ChEBI" id="CHEBI:18420"/>
    </ligand>
</feature>
<feature type="binding site" description="in other chain" evidence="1">
    <location>
        <begin position="38"/>
        <end position="41"/>
    </location>
    <ligand>
        <name>IMP</name>
        <dbReference type="ChEBI" id="CHEBI:58053"/>
        <note>ligand shared between dimeric partners</note>
    </ligand>
</feature>
<feature type="binding site" evidence="1">
    <location>
        <begin position="40"/>
        <end position="42"/>
    </location>
    <ligand>
        <name>GTP</name>
        <dbReference type="ChEBI" id="CHEBI:37565"/>
    </ligand>
</feature>
<feature type="binding site" evidence="1">
    <location>
        <position position="40"/>
    </location>
    <ligand>
        <name>Mg(2+)</name>
        <dbReference type="ChEBI" id="CHEBI:18420"/>
    </ligand>
</feature>
<feature type="binding site" description="in other chain" evidence="1">
    <location>
        <position position="128"/>
    </location>
    <ligand>
        <name>IMP</name>
        <dbReference type="ChEBI" id="CHEBI:58053"/>
        <note>ligand shared between dimeric partners</note>
    </ligand>
</feature>
<feature type="binding site" evidence="1">
    <location>
        <position position="142"/>
    </location>
    <ligand>
        <name>IMP</name>
        <dbReference type="ChEBI" id="CHEBI:58053"/>
        <note>ligand shared between dimeric partners</note>
    </ligand>
</feature>
<feature type="binding site" description="in other chain" evidence="1">
    <location>
        <position position="223"/>
    </location>
    <ligand>
        <name>IMP</name>
        <dbReference type="ChEBI" id="CHEBI:58053"/>
        <note>ligand shared between dimeric partners</note>
    </ligand>
</feature>
<feature type="binding site" description="in other chain" evidence="1">
    <location>
        <position position="238"/>
    </location>
    <ligand>
        <name>IMP</name>
        <dbReference type="ChEBI" id="CHEBI:58053"/>
        <note>ligand shared between dimeric partners</note>
    </ligand>
</feature>
<feature type="binding site" evidence="1">
    <location>
        <begin position="298"/>
        <end position="304"/>
    </location>
    <ligand>
        <name>substrate</name>
    </ligand>
</feature>
<feature type="binding site" description="in other chain" evidence="1">
    <location>
        <position position="302"/>
    </location>
    <ligand>
        <name>IMP</name>
        <dbReference type="ChEBI" id="CHEBI:58053"/>
        <note>ligand shared between dimeric partners</note>
    </ligand>
</feature>
<feature type="binding site" evidence="1">
    <location>
        <position position="304"/>
    </location>
    <ligand>
        <name>GTP</name>
        <dbReference type="ChEBI" id="CHEBI:37565"/>
    </ligand>
</feature>
<feature type="binding site" evidence="1">
    <location>
        <begin position="330"/>
        <end position="332"/>
    </location>
    <ligand>
        <name>GTP</name>
        <dbReference type="ChEBI" id="CHEBI:37565"/>
    </ligand>
</feature>
<feature type="binding site" evidence="1">
    <location>
        <begin position="413"/>
        <end position="415"/>
    </location>
    <ligand>
        <name>GTP</name>
        <dbReference type="ChEBI" id="CHEBI:37565"/>
    </ligand>
</feature>
<proteinExistence type="inferred from homology"/>
<evidence type="ECO:0000255" key="1">
    <source>
        <dbReference type="HAMAP-Rule" id="MF_00011"/>
    </source>
</evidence>
<comment type="function">
    <text evidence="1">Plays an important role in the de novo pathway of purine nucleotide biosynthesis. Catalyzes the first committed step in the biosynthesis of AMP from IMP.</text>
</comment>
<comment type="catalytic activity">
    <reaction evidence="1">
        <text>IMP + L-aspartate + GTP = N(6)-(1,2-dicarboxyethyl)-AMP + GDP + phosphate + 2 H(+)</text>
        <dbReference type="Rhea" id="RHEA:15753"/>
        <dbReference type="ChEBI" id="CHEBI:15378"/>
        <dbReference type="ChEBI" id="CHEBI:29991"/>
        <dbReference type="ChEBI" id="CHEBI:37565"/>
        <dbReference type="ChEBI" id="CHEBI:43474"/>
        <dbReference type="ChEBI" id="CHEBI:57567"/>
        <dbReference type="ChEBI" id="CHEBI:58053"/>
        <dbReference type="ChEBI" id="CHEBI:58189"/>
        <dbReference type="EC" id="6.3.4.4"/>
    </reaction>
</comment>
<comment type="cofactor">
    <cofactor evidence="1">
        <name>Mg(2+)</name>
        <dbReference type="ChEBI" id="CHEBI:18420"/>
    </cofactor>
    <text evidence="1">Binds 1 Mg(2+) ion per subunit.</text>
</comment>
<comment type="pathway">
    <text evidence="1">Purine metabolism; AMP biosynthesis via de novo pathway; AMP from IMP: step 1/2.</text>
</comment>
<comment type="subunit">
    <text evidence="1">Homodimer.</text>
</comment>
<comment type="subcellular location">
    <subcellularLocation>
        <location evidence="1">Cytoplasm</location>
    </subcellularLocation>
</comment>
<comment type="similarity">
    <text evidence="1">Belongs to the adenylosuccinate synthetase family.</text>
</comment>
<organism>
    <name type="scientific">Acidothermus cellulolyticus (strain ATCC 43068 / DSM 8971 / 11B)</name>
    <dbReference type="NCBI Taxonomy" id="351607"/>
    <lineage>
        <taxon>Bacteria</taxon>
        <taxon>Bacillati</taxon>
        <taxon>Actinomycetota</taxon>
        <taxon>Actinomycetes</taxon>
        <taxon>Acidothermales</taxon>
        <taxon>Acidothermaceae</taxon>
        <taxon>Acidothermus</taxon>
    </lineage>
</organism>
<keyword id="KW-0963">Cytoplasm</keyword>
<keyword id="KW-0342">GTP-binding</keyword>
<keyword id="KW-0436">Ligase</keyword>
<keyword id="KW-0460">Magnesium</keyword>
<keyword id="KW-0479">Metal-binding</keyword>
<keyword id="KW-0547">Nucleotide-binding</keyword>
<keyword id="KW-0658">Purine biosynthesis</keyword>
<keyword id="KW-1185">Reference proteome</keyword>
<reference key="1">
    <citation type="journal article" date="2009" name="Genome Res.">
        <title>Complete genome of the cellulolytic thermophile Acidothermus cellulolyticus 11B provides insights into its ecophysiological and evolutionary adaptations.</title>
        <authorList>
            <person name="Barabote R.D."/>
            <person name="Xie G."/>
            <person name="Leu D.H."/>
            <person name="Normand P."/>
            <person name="Necsulea A."/>
            <person name="Daubin V."/>
            <person name="Medigue C."/>
            <person name="Adney W.S."/>
            <person name="Xu X.C."/>
            <person name="Lapidus A."/>
            <person name="Parales R.E."/>
            <person name="Detter C."/>
            <person name="Pujic P."/>
            <person name="Bruce D."/>
            <person name="Lavire C."/>
            <person name="Challacombe J.F."/>
            <person name="Brettin T.S."/>
            <person name="Berry A.M."/>
        </authorList>
    </citation>
    <scope>NUCLEOTIDE SEQUENCE [LARGE SCALE GENOMIC DNA]</scope>
    <source>
        <strain>ATCC 43068 / DSM 8971 / 11B</strain>
    </source>
</reference>
<protein>
    <recommendedName>
        <fullName evidence="1">Adenylosuccinate synthetase</fullName>
        <shortName evidence="1">AMPSase</shortName>
        <shortName evidence="1">AdSS</shortName>
        <ecNumber evidence="1">6.3.4.4</ecNumber>
    </recommendedName>
    <alternativeName>
        <fullName evidence="1">IMP--aspartate ligase</fullName>
    </alternativeName>
</protein>
<dbReference type="EC" id="6.3.4.4" evidence="1"/>
<dbReference type="EMBL" id="CP000481">
    <property type="protein sequence ID" value="ABK53898.1"/>
    <property type="molecule type" value="Genomic_DNA"/>
</dbReference>
<dbReference type="RefSeq" id="WP_011720961.1">
    <property type="nucleotide sequence ID" value="NC_008578.1"/>
</dbReference>
<dbReference type="SMR" id="A0LWT8"/>
<dbReference type="FunCoup" id="A0LWT8">
    <property type="interactions" value="409"/>
</dbReference>
<dbReference type="STRING" id="351607.Acel_2126"/>
<dbReference type="KEGG" id="ace:Acel_2126"/>
<dbReference type="eggNOG" id="COG0104">
    <property type="taxonomic scope" value="Bacteria"/>
</dbReference>
<dbReference type="HOGENOM" id="CLU_029848_0_0_11"/>
<dbReference type="InParanoid" id="A0LWT8"/>
<dbReference type="OrthoDB" id="9807553at2"/>
<dbReference type="UniPathway" id="UPA00075">
    <property type="reaction ID" value="UER00335"/>
</dbReference>
<dbReference type="Proteomes" id="UP000008221">
    <property type="component" value="Chromosome"/>
</dbReference>
<dbReference type="GO" id="GO:0005737">
    <property type="term" value="C:cytoplasm"/>
    <property type="evidence" value="ECO:0007669"/>
    <property type="project" value="UniProtKB-SubCell"/>
</dbReference>
<dbReference type="GO" id="GO:0004019">
    <property type="term" value="F:adenylosuccinate synthase activity"/>
    <property type="evidence" value="ECO:0007669"/>
    <property type="project" value="UniProtKB-UniRule"/>
</dbReference>
<dbReference type="GO" id="GO:0005525">
    <property type="term" value="F:GTP binding"/>
    <property type="evidence" value="ECO:0007669"/>
    <property type="project" value="UniProtKB-UniRule"/>
</dbReference>
<dbReference type="GO" id="GO:0000287">
    <property type="term" value="F:magnesium ion binding"/>
    <property type="evidence" value="ECO:0007669"/>
    <property type="project" value="UniProtKB-UniRule"/>
</dbReference>
<dbReference type="GO" id="GO:0044208">
    <property type="term" value="P:'de novo' AMP biosynthetic process"/>
    <property type="evidence" value="ECO:0007669"/>
    <property type="project" value="UniProtKB-UniRule"/>
</dbReference>
<dbReference type="GO" id="GO:0046040">
    <property type="term" value="P:IMP metabolic process"/>
    <property type="evidence" value="ECO:0007669"/>
    <property type="project" value="TreeGrafter"/>
</dbReference>
<dbReference type="CDD" id="cd03108">
    <property type="entry name" value="AdSS"/>
    <property type="match status" value="1"/>
</dbReference>
<dbReference type="FunFam" id="1.10.300.10:FF:000001">
    <property type="entry name" value="Adenylosuccinate synthetase"/>
    <property type="match status" value="1"/>
</dbReference>
<dbReference type="FunFam" id="3.90.170.10:FF:000001">
    <property type="entry name" value="Adenylosuccinate synthetase"/>
    <property type="match status" value="1"/>
</dbReference>
<dbReference type="Gene3D" id="3.40.440.10">
    <property type="entry name" value="Adenylosuccinate Synthetase, subunit A, domain 1"/>
    <property type="match status" value="1"/>
</dbReference>
<dbReference type="Gene3D" id="1.10.300.10">
    <property type="entry name" value="Adenylosuccinate Synthetase, subunit A, domain 2"/>
    <property type="match status" value="1"/>
</dbReference>
<dbReference type="Gene3D" id="3.90.170.10">
    <property type="entry name" value="Adenylosuccinate Synthetase, subunit A, domain 3"/>
    <property type="match status" value="1"/>
</dbReference>
<dbReference type="HAMAP" id="MF_00011">
    <property type="entry name" value="Adenylosucc_synth"/>
    <property type="match status" value="1"/>
</dbReference>
<dbReference type="InterPro" id="IPR018220">
    <property type="entry name" value="Adenylosuccin_syn_GTP-bd"/>
</dbReference>
<dbReference type="InterPro" id="IPR033128">
    <property type="entry name" value="Adenylosuccin_syn_Lys_AS"/>
</dbReference>
<dbReference type="InterPro" id="IPR042109">
    <property type="entry name" value="Adenylosuccinate_synth_dom1"/>
</dbReference>
<dbReference type="InterPro" id="IPR042110">
    <property type="entry name" value="Adenylosuccinate_synth_dom2"/>
</dbReference>
<dbReference type="InterPro" id="IPR042111">
    <property type="entry name" value="Adenylosuccinate_synth_dom3"/>
</dbReference>
<dbReference type="InterPro" id="IPR001114">
    <property type="entry name" value="Adenylosuccinate_synthetase"/>
</dbReference>
<dbReference type="InterPro" id="IPR027417">
    <property type="entry name" value="P-loop_NTPase"/>
</dbReference>
<dbReference type="NCBIfam" id="NF002223">
    <property type="entry name" value="PRK01117.1"/>
    <property type="match status" value="1"/>
</dbReference>
<dbReference type="NCBIfam" id="TIGR00184">
    <property type="entry name" value="purA"/>
    <property type="match status" value="1"/>
</dbReference>
<dbReference type="PANTHER" id="PTHR11846">
    <property type="entry name" value="ADENYLOSUCCINATE SYNTHETASE"/>
    <property type="match status" value="1"/>
</dbReference>
<dbReference type="PANTHER" id="PTHR11846:SF0">
    <property type="entry name" value="ADENYLOSUCCINATE SYNTHETASE"/>
    <property type="match status" value="1"/>
</dbReference>
<dbReference type="Pfam" id="PF00709">
    <property type="entry name" value="Adenylsucc_synt"/>
    <property type="match status" value="1"/>
</dbReference>
<dbReference type="SMART" id="SM00788">
    <property type="entry name" value="Adenylsucc_synt"/>
    <property type="match status" value="1"/>
</dbReference>
<dbReference type="SUPFAM" id="SSF52540">
    <property type="entry name" value="P-loop containing nucleoside triphosphate hydrolases"/>
    <property type="match status" value="1"/>
</dbReference>
<dbReference type="PROSITE" id="PS01266">
    <property type="entry name" value="ADENYLOSUCCIN_SYN_1"/>
    <property type="match status" value="1"/>
</dbReference>
<dbReference type="PROSITE" id="PS00513">
    <property type="entry name" value="ADENYLOSUCCIN_SYN_2"/>
    <property type="match status" value="1"/>
</dbReference>